<accession>O32292</accession>
<reference key="1">
    <citation type="journal article" date="1997" name="Nature">
        <title>The complete genome sequence of the Gram-positive bacterium Bacillus subtilis.</title>
        <authorList>
            <person name="Kunst F."/>
            <person name="Ogasawara N."/>
            <person name="Moszer I."/>
            <person name="Albertini A.M."/>
            <person name="Alloni G."/>
            <person name="Azevedo V."/>
            <person name="Bertero M.G."/>
            <person name="Bessieres P."/>
            <person name="Bolotin A."/>
            <person name="Borchert S."/>
            <person name="Borriss R."/>
            <person name="Boursier L."/>
            <person name="Brans A."/>
            <person name="Braun M."/>
            <person name="Brignell S.C."/>
            <person name="Bron S."/>
            <person name="Brouillet S."/>
            <person name="Bruschi C.V."/>
            <person name="Caldwell B."/>
            <person name="Capuano V."/>
            <person name="Carter N.M."/>
            <person name="Choi S.-K."/>
            <person name="Codani J.-J."/>
            <person name="Connerton I.F."/>
            <person name="Cummings N.J."/>
            <person name="Daniel R.A."/>
            <person name="Denizot F."/>
            <person name="Devine K.M."/>
            <person name="Duesterhoeft A."/>
            <person name="Ehrlich S.D."/>
            <person name="Emmerson P.T."/>
            <person name="Entian K.-D."/>
            <person name="Errington J."/>
            <person name="Fabret C."/>
            <person name="Ferrari E."/>
            <person name="Foulger D."/>
            <person name="Fritz C."/>
            <person name="Fujita M."/>
            <person name="Fujita Y."/>
            <person name="Fuma S."/>
            <person name="Galizzi A."/>
            <person name="Galleron N."/>
            <person name="Ghim S.-Y."/>
            <person name="Glaser P."/>
            <person name="Goffeau A."/>
            <person name="Golightly E.J."/>
            <person name="Grandi G."/>
            <person name="Guiseppi G."/>
            <person name="Guy B.J."/>
            <person name="Haga K."/>
            <person name="Haiech J."/>
            <person name="Harwood C.R."/>
            <person name="Henaut A."/>
            <person name="Hilbert H."/>
            <person name="Holsappel S."/>
            <person name="Hosono S."/>
            <person name="Hullo M.-F."/>
            <person name="Itaya M."/>
            <person name="Jones L.-M."/>
            <person name="Joris B."/>
            <person name="Karamata D."/>
            <person name="Kasahara Y."/>
            <person name="Klaerr-Blanchard M."/>
            <person name="Klein C."/>
            <person name="Kobayashi Y."/>
            <person name="Koetter P."/>
            <person name="Koningstein G."/>
            <person name="Krogh S."/>
            <person name="Kumano M."/>
            <person name="Kurita K."/>
            <person name="Lapidus A."/>
            <person name="Lardinois S."/>
            <person name="Lauber J."/>
            <person name="Lazarevic V."/>
            <person name="Lee S.-M."/>
            <person name="Levine A."/>
            <person name="Liu H."/>
            <person name="Masuda S."/>
            <person name="Mauel C."/>
            <person name="Medigue C."/>
            <person name="Medina N."/>
            <person name="Mellado R.P."/>
            <person name="Mizuno M."/>
            <person name="Moestl D."/>
            <person name="Nakai S."/>
            <person name="Noback M."/>
            <person name="Noone D."/>
            <person name="O'Reilly M."/>
            <person name="Ogawa K."/>
            <person name="Ogiwara A."/>
            <person name="Oudega B."/>
            <person name="Park S.-H."/>
            <person name="Parro V."/>
            <person name="Pohl T.M."/>
            <person name="Portetelle D."/>
            <person name="Porwollik S."/>
            <person name="Prescott A.M."/>
            <person name="Presecan E."/>
            <person name="Pujic P."/>
            <person name="Purnelle B."/>
            <person name="Rapoport G."/>
            <person name="Rey M."/>
            <person name="Reynolds S."/>
            <person name="Rieger M."/>
            <person name="Rivolta C."/>
            <person name="Rocha E."/>
            <person name="Roche B."/>
            <person name="Rose M."/>
            <person name="Sadaie Y."/>
            <person name="Sato T."/>
            <person name="Scanlan E."/>
            <person name="Schleich S."/>
            <person name="Schroeter R."/>
            <person name="Scoffone F."/>
            <person name="Sekiguchi J."/>
            <person name="Sekowska A."/>
            <person name="Seror S.J."/>
            <person name="Serror P."/>
            <person name="Shin B.-S."/>
            <person name="Soldo B."/>
            <person name="Sorokin A."/>
            <person name="Tacconi E."/>
            <person name="Takagi T."/>
            <person name="Takahashi H."/>
            <person name="Takemaru K."/>
            <person name="Takeuchi M."/>
            <person name="Tamakoshi A."/>
            <person name="Tanaka T."/>
            <person name="Terpstra P."/>
            <person name="Tognoni A."/>
            <person name="Tosato V."/>
            <person name="Uchiyama S."/>
            <person name="Vandenbol M."/>
            <person name="Vannier F."/>
            <person name="Vassarotti A."/>
            <person name="Viari A."/>
            <person name="Wambutt R."/>
            <person name="Wedler E."/>
            <person name="Wedler H."/>
            <person name="Weitzenegger T."/>
            <person name="Winters P."/>
            <person name="Wipat A."/>
            <person name="Yamamoto H."/>
            <person name="Yamane K."/>
            <person name="Yasumoto K."/>
            <person name="Yata K."/>
            <person name="Yoshida K."/>
            <person name="Yoshikawa H.-F."/>
            <person name="Zumstein E."/>
            <person name="Yoshikawa H."/>
            <person name="Danchin A."/>
        </authorList>
    </citation>
    <scope>NUCLEOTIDE SEQUENCE [LARGE SCALE GENOMIC DNA]</scope>
    <source>
        <strain>168</strain>
    </source>
</reference>
<evidence type="ECO:0000250" key="1"/>
<evidence type="ECO:0000255" key="2">
    <source>
        <dbReference type="PROSITE-ProRule" id="PRU00416"/>
    </source>
</evidence>
<protein>
    <recommendedName>
        <fullName>Putative phosphotransferase enzyme IIA component YyzE</fullName>
    </recommendedName>
    <alternativeName>
        <fullName>PTS system EIIA component</fullName>
    </alternativeName>
</protein>
<organism>
    <name type="scientific">Bacillus subtilis (strain 168)</name>
    <dbReference type="NCBI Taxonomy" id="224308"/>
    <lineage>
        <taxon>Bacteria</taxon>
        <taxon>Bacillati</taxon>
        <taxon>Bacillota</taxon>
        <taxon>Bacilli</taxon>
        <taxon>Bacillales</taxon>
        <taxon>Bacillaceae</taxon>
        <taxon>Bacillus</taxon>
    </lineage>
</organism>
<proteinExistence type="inferred from homology"/>
<name>PTXA_BACSU</name>
<comment type="function">
    <text evidence="1">The phosphoenolpyruvate-dependent sugar phosphotransferase system (PTS), a major carbohydrate active -transport system, catalyzes the phosphorylation of incoming sugar substrates concomitant with their translocation across the cell membrane.</text>
</comment>
<comment type="subcellular location">
    <subcellularLocation>
        <location evidence="1">Cytoplasm</location>
    </subcellularLocation>
</comment>
<comment type="domain">
    <text>The EIIA domain is phosphorylated by phospho-HPr on a histidyl residue. Then, it transfers the phosphoryl group to the EIIB domain.</text>
</comment>
<feature type="chain" id="PRO_0000376798" description="Putative phosphotransferase enzyme IIA component YyzE">
    <location>
        <begin position="1"/>
        <end position="76"/>
    </location>
</feature>
<feature type="domain" description="PTS EIIA type-1" evidence="2">
    <location>
        <begin position="1"/>
        <end position="76"/>
    </location>
</feature>
<feature type="active site" description="Tele-phosphohistidine intermediate" evidence="1">
    <location>
        <position position="22"/>
    </location>
</feature>
<dbReference type="EMBL" id="AL009126">
    <property type="protein sequence ID" value="CAB16049.1"/>
    <property type="molecule type" value="Genomic_DNA"/>
</dbReference>
<dbReference type="PIR" id="D70092">
    <property type="entry name" value="D70092"/>
</dbReference>
<dbReference type="RefSeq" id="WP_003226990.1">
    <property type="nucleotide sequence ID" value="NZ_CP103783.1"/>
</dbReference>
<dbReference type="SMR" id="O32292"/>
<dbReference type="FunCoup" id="O32292">
    <property type="interactions" value="145"/>
</dbReference>
<dbReference type="STRING" id="224308.BSU40120"/>
<dbReference type="PaxDb" id="224308-BSU40120"/>
<dbReference type="EnsemblBacteria" id="CAB16049">
    <property type="protein sequence ID" value="CAB16049"/>
    <property type="gene ID" value="BSU_40120"/>
</dbReference>
<dbReference type="GeneID" id="937724"/>
<dbReference type="KEGG" id="bsu:BSU40120"/>
<dbReference type="PATRIC" id="fig|224308.179.peg.4339"/>
<dbReference type="eggNOG" id="COG2190">
    <property type="taxonomic scope" value="Bacteria"/>
</dbReference>
<dbReference type="InParanoid" id="O32292"/>
<dbReference type="OrthoDB" id="92465at2"/>
<dbReference type="PhylomeDB" id="O32292"/>
<dbReference type="BioCyc" id="BSUB:BSU40120-MONOMER"/>
<dbReference type="Proteomes" id="UP000001570">
    <property type="component" value="Chromosome"/>
</dbReference>
<dbReference type="GO" id="GO:0005737">
    <property type="term" value="C:cytoplasm"/>
    <property type="evidence" value="ECO:0007669"/>
    <property type="project" value="UniProtKB-SubCell"/>
</dbReference>
<dbReference type="GO" id="GO:0016301">
    <property type="term" value="F:kinase activity"/>
    <property type="evidence" value="ECO:0000318"/>
    <property type="project" value="GO_Central"/>
</dbReference>
<dbReference type="GO" id="GO:0009401">
    <property type="term" value="P:phosphoenolpyruvate-dependent sugar phosphotransferase system"/>
    <property type="evidence" value="ECO:0000318"/>
    <property type="project" value="GO_Central"/>
</dbReference>
<dbReference type="Gene3D" id="2.70.70.10">
    <property type="entry name" value="Glucose Permease (Domain IIA)"/>
    <property type="match status" value="1"/>
</dbReference>
<dbReference type="InterPro" id="IPR011055">
    <property type="entry name" value="Dup_hybrid_motif"/>
</dbReference>
<dbReference type="InterPro" id="IPR001127">
    <property type="entry name" value="PTS_EIIA_1_perm"/>
</dbReference>
<dbReference type="InterPro" id="IPR050890">
    <property type="entry name" value="PTS_EIIA_component"/>
</dbReference>
<dbReference type="PANTHER" id="PTHR45008">
    <property type="entry name" value="PTS SYSTEM GLUCOSE-SPECIFIC EIIA COMPONENT"/>
    <property type="match status" value="1"/>
</dbReference>
<dbReference type="PANTHER" id="PTHR45008:SF1">
    <property type="entry name" value="PTS SYSTEM GLUCOSE-SPECIFIC EIIA COMPONENT"/>
    <property type="match status" value="1"/>
</dbReference>
<dbReference type="Pfam" id="PF00358">
    <property type="entry name" value="PTS_EIIA_1"/>
    <property type="match status" value="1"/>
</dbReference>
<dbReference type="SUPFAM" id="SSF51261">
    <property type="entry name" value="Duplicated hybrid motif"/>
    <property type="match status" value="1"/>
</dbReference>
<dbReference type="PROSITE" id="PS51093">
    <property type="entry name" value="PTS_EIIA_TYPE_1"/>
    <property type="match status" value="1"/>
</dbReference>
<gene>
    <name type="primary">yyzE</name>
    <name type="ordered locus">BSU40120</name>
</gene>
<keyword id="KW-0963">Cytoplasm</keyword>
<keyword id="KW-0418">Kinase</keyword>
<keyword id="KW-0598">Phosphotransferase system</keyword>
<keyword id="KW-1185">Reference proteome</keyword>
<keyword id="KW-0762">Sugar transport</keyword>
<keyword id="KW-0808">Transferase</keyword>
<keyword id="KW-0813">Transport</keyword>
<sequence>MVTPTKHAIGLRSASGVELLAHIGLDTVTFDGTPFSLKVKEGDTVKKGEVLVEFDKAFIEDIEESALHQKIFTVVS</sequence>